<protein>
    <recommendedName>
        <fullName evidence="1">tRNA dimethylallyltransferase</fullName>
        <ecNumber evidence="1">2.5.1.75</ecNumber>
    </recommendedName>
    <alternativeName>
        <fullName evidence="1">Dimethylallyl diphosphate:tRNA dimethylallyltransferase</fullName>
        <shortName evidence="1">DMAPP:tRNA dimethylallyltransferase</shortName>
        <shortName evidence="1">DMATase</shortName>
    </alternativeName>
    <alternativeName>
        <fullName evidence="1">Isopentenyl-diphosphate:tRNA isopentenyltransferase</fullName>
        <shortName evidence="1">IPP transferase</shortName>
        <shortName evidence="1">IPPT</shortName>
        <shortName evidence="1">IPTase</shortName>
    </alternativeName>
</protein>
<name>MIAA_SHEPC</name>
<gene>
    <name evidence="1" type="primary">miaA</name>
    <name type="ordered locus">Sputcn32_3281</name>
</gene>
<proteinExistence type="inferred from homology"/>
<accession>A4YAL0</accession>
<reference key="1">
    <citation type="submission" date="2007-04" db="EMBL/GenBank/DDBJ databases">
        <title>Complete sequence of Shewanella putrefaciens CN-32.</title>
        <authorList>
            <consortium name="US DOE Joint Genome Institute"/>
            <person name="Copeland A."/>
            <person name="Lucas S."/>
            <person name="Lapidus A."/>
            <person name="Barry K."/>
            <person name="Detter J.C."/>
            <person name="Glavina del Rio T."/>
            <person name="Hammon N."/>
            <person name="Israni S."/>
            <person name="Dalin E."/>
            <person name="Tice H."/>
            <person name="Pitluck S."/>
            <person name="Chain P."/>
            <person name="Malfatti S."/>
            <person name="Shin M."/>
            <person name="Vergez L."/>
            <person name="Schmutz J."/>
            <person name="Larimer F."/>
            <person name="Land M."/>
            <person name="Hauser L."/>
            <person name="Kyrpides N."/>
            <person name="Mikhailova N."/>
            <person name="Romine M.F."/>
            <person name="Fredrickson J."/>
            <person name="Tiedje J."/>
            <person name="Richardson P."/>
        </authorList>
    </citation>
    <scope>NUCLEOTIDE SEQUENCE [LARGE SCALE GENOMIC DNA]</scope>
    <source>
        <strain>CN-32 / ATCC BAA-453</strain>
    </source>
</reference>
<evidence type="ECO:0000255" key="1">
    <source>
        <dbReference type="HAMAP-Rule" id="MF_00185"/>
    </source>
</evidence>
<organism>
    <name type="scientific">Shewanella putrefaciens (strain CN-32 / ATCC BAA-453)</name>
    <dbReference type="NCBI Taxonomy" id="319224"/>
    <lineage>
        <taxon>Bacteria</taxon>
        <taxon>Pseudomonadati</taxon>
        <taxon>Pseudomonadota</taxon>
        <taxon>Gammaproteobacteria</taxon>
        <taxon>Alteromonadales</taxon>
        <taxon>Shewanellaceae</taxon>
        <taxon>Shewanella</taxon>
    </lineage>
</organism>
<feature type="chain" id="PRO_0000377315" description="tRNA dimethylallyltransferase">
    <location>
        <begin position="1"/>
        <end position="304"/>
    </location>
</feature>
<feature type="region of interest" description="Interaction with substrate tRNA" evidence="1">
    <location>
        <begin position="35"/>
        <end position="38"/>
    </location>
</feature>
<feature type="region of interest" description="Interaction with substrate tRNA" evidence="1">
    <location>
        <begin position="159"/>
        <end position="163"/>
    </location>
</feature>
<feature type="region of interest" description="Interaction with substrate tRNA" evidence="1">
    <location>
        <begin position="240"/>
        <end position="245"/>
    </location>
</feature>
<feature type="binding site" evidence="1">
    <location>
        <begin position="10"/>
        <end position="17"/>
    </location>
    <ligand>
        <name>ATP</name>
        <dbReference type="ChEBI" id="CHEBI:30616"/>
    </ligand>
</feature>
<feature type="binding site" evidence="1">
    <location>
        <begin position="12"/>
        <end position="17"/>
    </location>
    <ligand>
        <name>substrate</name>
    </ligand>
</feature>
<feature type="site" description="Interaction with substrate tRNA" evidence="1">
    <location>
        <position position="101"/>
    </location>
</feature>
<feature type="site" description="Interaction with substrate tRNA" evidence="1">
    <location>
        <position position="123"/>
    </location>
</feature>
<keyword id="KW-0067">ATP-binding</keyword>
<keyword id="KW-0460">Magnesium</keyword>
<keyword id="KW-0547">Nucleotide-binding</keyword>
<keyword id="KW-0808">Transferase</keyword>
<keyword id="KW-0819">tRNA processing</keyword>
<dbReference type="EC" id="2.5.1.75" evidence="1"/>
<dbReference type="EMBL" id="CP000681">
    <property type="protein sequence ID" value="ABP76993.1"/>
    <property type="molecule type" value="Genomic_DNA"/>
</dbReference>
<dbReference type="SMR" id="A4YAL0"/>
<dbReference type="STRING" id="319224.Sputcn32_3281"/>
<dbReference type="KEGG" id="spc:Sputcn32_3281"/>
<dbReference type="eggNOG" id="COG0324">
    <property type="taxonomic scope" value="Bacteria"/>
</dbReference>
<dbReference type="HOGENOM" id="CLU_032616_0_0_6"/>
<dbReference type="GO" id="GO:0005524">
    <property type="term" value="F:ATP binding"/>
    <property type="evidence" value="ECO:0007669"/>
    <property type="project" value="UniProtKB-UniRule"/>
</dbReference>
<dbReference type="GO" id="GO:0052381">
    <property type="term" value="F:tRNA dimethylallyltransferase activity"/>
    <property type="evidence" value="ECO:0007669"/>
    <property type="project" value="UniProtKB-UniRule"/>
</dbReference>
<dbReference type="GO" id="GO:0006400">
    <property type="term" value="P:tRNA modification"/>
    <property type="evidence" value="ECO:0007669"/>
    <property type="project" value="TreeGrafter"/>
</dbReference>
<dbReference type="FunFam" id="1.10.20.140:FF:000001">
    <property type="entry name" value="tRNA dimethylallyltransferase"/>
    <property type="match status" value="1"/>
</dbReference>
<dbReference type="Gene3D" id="1.10.20.140">
    <property type="match status" value="1"/>
</dbReference>
<dbReference type="Gene3D" id="3.40.50.300">
    <property type="entry name" value="P-loop containing nucleotide triphosphate hydrolases"/>
    <property type="match status" value="1"/>
</dbReference>
<dbReference type="HAMAP" id="MF_00185">
    <property type="entry name" value="IPP_trans"/>
    <property type="match status" value="1"/>
</dbReference>
<dbReference type="InterPro" id="IPR039657">
    <property type="entry name" value="Dimethylallyltransferase"/>
</dbReference>
<dbReference type="InterPro" id="IPR018022">
    <property type="entry name" value="IPT"/>
</dbReference>
<dbReference type="InterPro" id="IPR027417">
    <property type="entry name" value="P-loop_NTPase"/>
</dbReference>
<dbReference type="NCBIfam" id="TIGR00174">
    <property type="entry name" value="miaA"/>
    <property type="match status" value="1"/>
</dbReference>
<dbReference type="PANTHER" id="PTHR11088">
    <property type="entry name" value="TRNA DIMETHYLALLYLTRANSFERASE"/>
    <property type="match status" value="1"/>
</dbReference>
<dbReference type="PANTHER" id="PTHR11088:SF60">
    <property type="entry name" value="TRNA DIMETHYLALLYLTRANSFERASE"/>
    <property type="match status" value="1"/>
</dbReference>
<dbReference type="Pfam" id="PF01715">
    <property type="entry name" value="IPPT"/>
    <property type="match status" value="1"/>
</dbReference>
<dbReference type="SUPFAM" id="SSF52540">
    <property type="entry name" value="P-loop containing nucleoside triphosphate hydrolases"/>
    <property type="match status" value="1"/>
</dbReference>
<comment type="function">
    <text evidence="1">Catalyzes the transfer of a dimethylallyl group onto the adenine at position 37 in tRNAs that read codons beginning with uridine, leading to the formation of N6-(dimethylallyl)adenosine (i(6)A).</text>
</comment>
<comment type="catalytic activity">
    <reaction evidence="1">
        <text>adenosine(37) in tRNA + dimethylallyl diphosphate = N(6)-dimethylallyladenosine(37) in tRNA + diphosphate</text>
        <dbReference type="Rhea" id="RHEA:26482"/>
        <dbReference type="Rhea" id="RHEA-COMP:10162"/>
        <dbReference type="Rhea" id="RHEA-COMP:10375"/>
        <dbReference type="ChEBI" id="CHEBI:33019"/>
        <dbReference type="ChEBI" id="CHEBI:57623"/>
        <dbReference type="ChEBI" id="CHEBI:74411"/>
        <dbReference type="ChEBI" id="CHEBI:74415"/>
        <dbReference type="EC" id="2.5.1.75"/>
    </reaction>
</comment>
<comment type="cofactor">
    <cofactor evidence="1">
        <name>Mg(2+)</name>
        <dbReference type="ChEBI" id="CHEBI:18420"/>
    </cofactor>
</comment>
<comment type="subunit">
    <text evidence="1">Monomer.</text>
</comment>
<comment type="similarity">
    <text evidence="1">Belongs to the IPP transferase family.</text>
</comment>
<sequence length="304" mass="34173">MLPKVLFLMGPTASGKTALALELAENHNCEIISVDSALIYRGMDIGSAKPSMEELARGPHRLIDIRDPSESYSAADFRADALAEIAQIIRMGKTPLLVGGTMMYFKALLEGLSPLPSADDAIRADIQAEADVKGWETLHDQLRDIDPVSAERIHPNDPQRLSRALEVYRISGKSLTELTQTKSAPLPYDVVQFAIAPRERKVLHDLIAQRFRIMLQQGFIDEVTQLKARGDLHLDLPSMRCVGYRQCWQHLDGEFDYDTMVEKAVAATRQLAKRQLTWLRSWPELNWLESGAEGNLVTLMRHCR</sequence>